<proteinExistence type="inferred from homology"/>
<reference key="1">
    <citation type="journal article" date="2010" name="J. Bacteriol.">
        <title>Genome sequence of the deep-rooted Yersinia pestis strain Angola reveals new insights into the evolution and pangenome of the plague bacterium.</title>
        <authorList>
            <person name="Eppinger M."/>
            <person name="Worsham P.L."/>
            <person name="Nikolich M.P."/>
            <person name="Riley D.R."/>
            <person name="Sebastian Y."/>
            <person name="Mou S."/>
            <person name="Achtman M."/>
            <person name="Lindler L.E."/>
            <person name="Ravel J."/>
        </authorList>
    </citation>
    <scope>NUCLEOTIDE SEQUENCE [LARGE SCALE GENOMIC DNA]</scope>
    <source>
        <strain>Angola</strain>
    </source>
</reference>
<comment type="function">
    <text evidence="1">Part of the ABC transporter complex LsrABCD involved in autoinducer 2 (AI-2) import. Responsible for energy coupling to the transport system.</text>
</comment>
<comment type="catalytic activity">
    <reaction evidence="1">
        <text>ATP + H2O + (2R,4S)-2-methyl-2,3,3,4-tetrahydroxytetrahydrofuran-[AI-2-binding protein]Side 1 = ADP + phosphate + (2R,4S)-2-methyl-2,3,3,4-tetrahydroxytetrahydrofuranSide 2 + [AI-2-binding protein]Side 1.</text>
        <dbReference type="EC" id="7.6.2.13"/>
    </reaction>
</comment>
<comment type="subunit">
    <text evidence="1">The complex is composed of two ATP-binding proteins (LsrA), two transmembrane proteins (LsrC and LsrD) and a solute-binding protein (LsrB).</text>
</comment>
<comment type="subcellular location">
    <subcellularLocation>
        <location evidence="1">Cell inner membrane</location>
        <topology evidence="1">Peripheral membrane protein</topology>
    </subcellularLocation>
</comment>
<comment type="similarity">
    <text evidence="4">Belongs to the ABC transporter superfamily. AI-2 autoinducer porter (TC 3.A.1.2.8) family.</text>
</comment>
<dbReference type="EC" id="7.6.2.13" evidence="1"/>
<dbReference type="EMBL" id="CP000901">
    <property type="protein sequence ID" value="ABX87181.1"/>
    <property type="molecule type" value="Genomic_DNA"/>
</dbReference>
<dbReference type="RefSeq" id="WP_002209192.1">
    <property type="nucleotide sequence ID" value="NZ_CP009935.1"/>
</dbReference>
<dbReference type="SMR" id="A9R074"/>
<dbReference type="GeneID" id="57974198"/>
<dbReference type="KEGG" id="ypg:YpAngola_A0858"/>
<dbReference type="PATRIC" id="fig|349746.12.peg.1809"/>
<dbReference type="GO" id="GO:0005886">
    <property type="term" value="C:plasma membrane"/>
    <property type="evidence" value="ECO:0007669"/>
    <property type="project" value="UniProtKB-SubCell"/>
</dbReference>
<dbReference type="GO" id="GO:0005524">
    <property type="term" value="F:ATP binding"/>
    <property type="evidence" value="ECO:0007669"/>
    <property type="project" value="UniProtKB-KW"/>
</dbReference>
<dbReference type="GO" id="GO:0016887">
    <property type="term" value="F:ATP hydrolysis activity"/>
    <property type="evidence" value="ECO:0007669"/>
    <property type="project" value="InterPro"/>
</dbReference>
<dbReference type="CDD" id="cd03216">
    <property type="entry name" value="ABC_Carb_Monos_I"/>
    <property type="match status" value="1"/>
</dbReference>
<dbReference type="CDD" id="cd03215">
    <property type="entry name" value="ABC_Carb_Monos_II"/>
    <property type="match status" value="1"/>
</dbReference>
<dbReference type="Gene3D" id="3.40.50.300">
    <property type="entry name" value="P-loop containing nucleotide triphosphate hydrolases"/>
    <property type="match status" value="2"/>
</dbReference>
<dbReference type="InterPro" id="IPR003593">
    <property type="entry name" value="AAA+_ATPase"/>
</dbReference>
<dbReference type="InterPro" id="IPR050107">
    <property type="entry name" value="ABC_carbohydrate_import_ATPase"/>
</dbReference>
<dbReference type="InterPro" id="IPR003439">
    <property type="entry name" value="ABC_transporter-like_ATP-bd"/>
</dbReference>
<dbReference type="InterPro" id="IPR017871">
    <property type="entry name" value="ABC_transporter-like_CS"/>
</dbReference>
<dbReference type="InterPro" id="IPR027417">
    <property type="entry name" value="P-loop_NTPase"/>
</dbReference>
<dbReference type="NCBIfam" id="NF011967">
    <property type="entry name" value="PRK15439.1"/>
    <property type="match status" value="1"/>
</dbReference>
<dbReference type="PANTHER" id="PTHR43790:SF2">
    <property type="entry name" value="AUTOINDUCER 2 IMPORT ATP-BINDING PROTEIN LSRA"/>
    <property type="match status" value="1"/>
</dbReference>
<dbReference type="PANTHER" id="PTHR43790">
    <property type="entry name" value="CARBOHYDRATE TRANSPORT ATP-BINDING PROTEIN MG119-RELATED"/>
    <property type="match status" value="1"/>
</dbReference>
<dbReference type="Pfam" id="PF00005">
    <property type="entry name" value="ABC_tran"/>
    <property type="match status" value="2"/>
</dbReference>
<dbReference type="SMART" id="SM00382">
    <property type="entry name" value="AAA"/>
    <property type="match status" value="2"/>
</dbReference>
<dbReference type="SUPFAM" id="SSF52540">
    <property type="entry name" value="P-loop containing nucleoside triphosphate hydrolases"/>
    <property type="match status" value="2"/>
</dbReference>
<dbReference type="PROSITE" id="PS00211">
    <property type="entry name" value="ABC_TRANSPORTER_1"/>
    <property type="match status" value="1"/>
</dbReference>
<dbReference type="PROSITE" id="PS50893">
    <property type="entry name" value="ABC_TRANSPORTER_2"/>
    <property type="match status" value="2"/>
</dbReference>
<accession>A9R074</accession>
<feature type="chain" id="PRO_0000351310" description="Autoinducer 2 import ATP-binding protein LsrA">
    <location>
        <begin position="1"/>
        <end position="527"/>
    </location>
</feature>
<feature type="domain" description="ABC transporter 1" evidence="2">
    <location>
        <begin position="12"/>
        <end position="240"/>
    </location>
</feature>
<feature type="domain" description="ABC transporter 2" evidence="2">
    <location>
        <begin position="266"/>
        <end position="506"/>
    </location>
</feature>
<feature type="region of interest" description="Disordered" evidence="3">
    <location>
        <begin position="507"/>
        <end position="527"/>
    </location>
</feature>
<feature type="compositionally biased region" description="Polar residues" evidence="3">
    <location>
        <begin position="510"/>
        <end position="521"/>
    </location>
</feature>
<feature type="binding site" evidence="2">
    <location>
        <begin position="44"/>
        <end position="51"/>
    </location>
    <ligand>
        <name>ATP</name>
        <dbReference type="ChEBI" id="CHEBI:30616"/>
    </ligand>
</feature>
<protein>
    <recommendedName>
        <fullName evidence="1">Autoinducer 2 import ATP-binding protein LsrA</fullName>
        <shortName evidence="1">AI-2 import ATP-binding protein LsrA</shortName>
        <ecNumber evidence="1">7.6.2.13</ecNumber>
    </recommendedName>
</protein>
<organism>
    <name type="scientific">Yersinia pestis bv. Antiqua (strain Angola)</name>
    <dbReference type="NCBI Taxonomy" id="349746"/>
    <lineage>
        <taxon>Bacteria</taxon>
        <taxon>Pseudomonadati</taxon>
        <taxon>Pseudomonadota</taxon>
        <taxon>Gammaproteobacteria</taxon>
        <taxon>Enterobacterales</taxon>
        <taxon>Yersiniaceae</taxon>
        <taxon>Yersinia</taxon>
    </lineage>
</organism>
<evidence type="ECO:0000250" key="1">
    <source>
        <dbReference type="UniProtKB" id="P77257"/>
    </source>
</evidence>
<evidence type="ECO:0000255" key="2">
    <source>
        <dbReference type="PROSITE-ProRule" id="PRU00434"/>
    </source>
</evidence>
<evidence type="ECO:0000256" key="3">
    <source>
        <dbReference type="SAM" id="MobiDB-lite"/>
    </source>
</evidence>
<evidence type="ECO:0000305" key="4"/>
<keyword id="KW-0067">ATP-binding</keyword>
<keyword id="KW-0997">Cell inner membrane</keyword>
<keyword id="KW-1003">Cell membrane</keyword>
<keyword id="KW-0472">Membrane</keyword>
<keyword id="KW-0547">Nucleotide-binding</keyword>
<keyword id="KW-0677">Repeat</keyword>
<keyword id="KW-1278">Translocase</keyword>
<keyword id="KW-0813">Transport</keyword>
<gene>
    <name type="primary">lsrA</name>
    <name type="ordered locus">YpAngola_A0858</name>
</gene>
<name>LSRA_YERPG</name>
<sequence length="527" mass="56928">MPHTVATPPPLLQVRGISKQFSGVVVLKSIDFTLQPGQVHALLGGNGAGKSTLMKIIAGILPPDTGVIEMNGQPCFNLTPAKAHQLGIYLVPQEPMLFANLSVQENILFRLPKHQADKKKMAQLLKNLGCHLDLSVSAGSLEVADQQLVEIMRGLIRDSHILILDEPTASLTPAETHRLFSQIRMLLQQGVGVVFISHKLPEIRQLADWVSVMRDGGIALSGATADFSTEDMIQAMTPEAQKGALTDSQKLWLELPGNRRAQSHAQSQQPVIHVHDLSGEGFAHISFHVQAGEILGLAGVVGAGRTELAETLYGLRPASTGNVILEEVNITAMKTANRLAAGLVYLPEDRQASGLYLDAPLSWNVCALAHDRQGLWTQPAQEAAVLERYRRALNIKFSHLEQPVRTLSGGNQQKLLIAKCLEANPLLLIIDEPTRGVDVSARSDIYQLIRSIAEQQVAIIFISSDLEEVVQMADRVLVMHQGEINGALSGAAMNVDTIMHMAFGEHRSASEPQGGTASSAENKGASC</sequence>